<comment type="function">
    <text evidence="5">Serine protease inhibitor that modulates blood feeding of ticks on vertebrate species (PubMed:36756125). Modestly inhibits human trypsin, plasma kallikrein (KLKB1), matriptase (ST14) and plasmin (PLG) via a classic serpin inhibitory mechanism (PubMed:36756125). Modestly reduces enzymatic activity of human alpha-chymotrypsin, coagulation factor Xa (F10), factor XIIa (F12), cathepsin G (CTSG), tPA/tissue-type plasminogen activator (PLAT) and uPA/urokinase-type plasminogen activator (PLAU) (PubMed:36756125). Probably acts as a substrate rather than an inhibitor for the human neutrophil elastase (ELANE) and thus reduces its enzymatic activity in in vitro assays (PubMed:36756125). Decreases expression of adhesion molecules VCAM1 and CD99 on the surface of human cells (PubMed:36756125). Increases the production of chemokines for neutrophils and monocytes, such as KC/CXCL1, MIP-2/CXCL2 and MIP-1/CCL2, and anti-inflammatory cytokine IL10 in mouse inflammation models (PubMed:36756125). Reduces the recruitment of mouse neutrophils and monocytes to the site of inflammation (PubMed:36756125). Decreases expression of CXCR2 on the surface of mouse neutrophils (PubMed:36756125). Increases expression of integrin ITGAM/ITGB2 on the surface of mouse neutrophils (PubMed:36756125).</text>
</comment>
<comment type="subunit">
    <text evidence="5">Interacts with human KLKB1 (PubMed:36756125). Interacts with human ST14 (PubMed:36756125). Interacts with human PLG (plasmin) (PubMed:36756125).</text>
</comment>
<comment type="subcellular location">
    <subcellularLocation>
        <location evidence="1">Secreted</location>
    </subcellularLocation>
</comment>
<comment type="tissue specificity">
    <text evidence="4 5">Highly expressed in salivary gland (PubMed:20940421, PubMed:36756125). Expressed in midgut and ovary (PubMed:36756125).</text>
</comment>
<comment type="induction">
    <text evidence="5">Induced by blood feeding.</text>
</comment>
<comment type="similarity">
    <text evidence="8">Belongs to the serpin family.</text>
</comment>
<proteinExistence type="evidence at protein level"/>
<feature type="signal peptide" evidence="2">
    <location>
        <begin position="1"/>
        <end position="16"/>
    </location>
</feature>
<feature type="chain" id="PRO_5007697560" description="Iripin-1" evidence="2">
    <location>
        <begin position="17"/>
        <end position="392"/>
    </location>
</feature>
<feature type="glycosylation site" description="N-linked (GlcNAc...) asparagine" evidence="3">
    <location>
        <position position="104"/>
    </location>
</feature>
<feature type="glycosylation site" description="N-linked (GlcNAc...) asparagine" evidence="3">
    <location>
        <position position="196"/>
    </location>
</feature>
<feature type="glycosylation site" description="N-linked (GlcNAc...) asparagine" evidence="3">
    <location>
        <position position="265"/>
    </location>
</feature>
<feature type="helix" evidence="12">
    <location>
        <begin position="20"/>
        <end position="36"/>
    </location>
</feature>
<feature type="strand" evidence="12">
    <location>
        <begin position="45"/>
        <end position="47"/>
    </location>
</feature>
<feature type="helix" evidence="12">
    <location>
        <begin position="49"/>
        <end position="62"/>
    </location>
</feature>
<feature type="helix" evidence="12">
    <location>
        <begin position="65"/>
        <end position="74"/>
    </location>
</feature>
<feature type="helix" evidence="12">
    <location>
        <begin position="77"/>
        <end position="80"/>
    </location>
</feature>
<feature type="helix" evidence="12">
    <location>
        <begin position="84"/>
        <end position="100"/>
    </location>
</feature>
<feature type="strand" evidence="12">
    <location>
        <begin position="104"/>
        <end position="116"/>
    </location>
</feature>
<feature type="helix" evidence="12">
    <location>
        <begin position="123"/>
        <end position="133"/>
    </location>
</feature>
<feature type="strand" evidence="12">
    <location>
        <begin position="136"/>
        <end position="140"/>
    </location>
</feature>
<feature type="turn" evidence="12">
    <location>
        <begin position="142"/>
        <end position="144"/>
    </location>
</feature>
<feature type="helix" evidence="12">
    <location>
        <begin position="146"/>
        <end position="160"/>
    </location>
</feature>
<feature type="turn" evidence="12">
    <location>
        <begin position="161"/>
        <end position="163"/>
    </location>
</feature>
<feature type="strand" evidence="12">
    <location>
        <begin position="179"/>
        <end position="188"/>
    </location>
</feature>
<feature type="strand" evidence="12">
    <location>
        <begin position="204"/>
        <end position="207"/>
    </location>
</feature>
<feature type="turn" evidence="12">
    <location>
        <begin position="208"/>
        <end position="210"/>
    </location>
</feature>
<feature type="strand" evidence="12">
    <location>
        <begin position="211"/>
        <end position="214"/>
    </location>
</feature>
<feature type="strand" evidence="12">
    <location>
        <begin position="221"/>
        <end position="229"/>
    </location>
</feature>
<feature type="turn" evidence="12">
    <location>
        <begin position="230"/>
        <end position="233"/>
    </location>
</feature>
<feature type="strand" evidence="12">
    <location>
        <begin position="234"/>
        <end position="241"/>
    </location>
</feature>
<feature type="strand" evidence="12">
    <location>
        <begin position="244"/>
        <end position="255"/>
    </location>
</feature>
<feature type="helix" evidence="12">
    <location>
        <begin position="259"/>
        <end position="264"/>
    </location>
</feature>
<feature type="helix" evidence="12">
    <location>
        <begin position="268"/>
        <end position="276"/>
    </location>
</feature>
<feature type="strand" evidence="12">
    <location>
        <begin position="279"/>
        <end position="286"/>
    </location>
</feature>
<feature type="strand" evidence="12">
    <location>
        <begin position="292"/>
        <end position="297"/>
    </location>
</feature>
<feature type="helix" evidence="12">
    <location>
        <begin position="299"/>
        <end position="304"/>
    </location>
</feature>
<feature type="turn" evidence="12">
    <location>
        <begin position="309"/>
        <end position="311"/>
    </location>
</feature>
<feature type="turn" evidence="12">
    <location>
        <begin position="318"/>
        <end position="320"/>
    </location>
</feature>
<feature type="strand" evidence="12">
    <location>
        <begin position="322"/>
        <end position="325"/>
    </location>
</feature>
<feature type="strand" evidence="12">
    <location>
        <begin position="330"/>
        <end position="338"/>
    </location>
</feature>
<feature type="strand" evidence="12">
    <location>
        <begin position="363"/>
        <end position="366"/>
    </location>
</feature>
<feature type="strand" evidence="12">
    <location>
        <begin position="371"/>
        <end position="377"/>
    </location>
</feature>
<feature type="turn" evidence="12">
    <location>
        <begin position="378"/>
        <end position="380"/>
    </location>
</feature>
<feature type="strand" evidence="12">
    <location>
        <begin position="383"/>
        <end position="389"/>
    </location>
</feature>
<sequence length="392" mass="43933">MKPLVPLLFLLVSCRAQGNDKLTFANNQFGLRLLNTLPSPPEENVFFSPYSVSTALGMAYAGARGDTQEELSEQLGYTAAGLSQDDVFNAYSDHTQWLKASRSNSTLSVANAAVLHDKVGLRYTFQRTIDHAFDADILKVDFVNERKGAVDRINYWVKDKTNGKIRSLFNKPLESETRLVLLNAIYFKGSWNTRFNKSRTEKSEFLNGGVTPTKVDMMMGSMNIGHHFFRDLKIDVADFPYQGRDYSMTVILPWRNDGVEAIKQNLTLDLFQKLVSELRERRVFVLFPKFKIEAEYSLKEPLQNLGIKQIFSGGSDLSGVTNDNDLVVSAVVHKAVLEVNEEGSEAAAVSSVVAVTRIGTQAFEFNVDHPFLFFIRNTVTNDILFAGQVNSL</sequence>
<accession>Q06B75</accession>
<name>IRS1_IXORI</name>
<protein>
    <recommendedName>
        <fullName evidence="7">Iripin-1</fullName>
    </recommendedName>
    <alternativeName>
        <fullName evidence="6">I ricinus serpin-1</fullName>
        <shortName evidence="6">IRS-1</shortName>
    </alternativeName>
    <alternativeName>
        <fullName evidence="9">Serpin-1</fullName>
    </alternativeName>
</protein>
<evidence type="ECO:0000250" key="1">
    <source>
        <dbReference type="UniProtKB" id="Q06B72"/>
    </source>
</evidence>
<evidence type="ECO:0000255" key="2"/>
<evidence type="ECO:0000255" key="3">
    <source>
        <dbReference type="PROSITE-ProRule" id="PRU00498"/>
    </source>
</evidence>
<evidence type="ECO:0000269" key="4">
    <source>
    </source>
</evidence>
<evidence type="ECO:0000269" key="5">
    <source>
    </source>
</evidence>
<evidence type="ECO:0000303" key="6">
    <source>
    </source>
</evidence>
<evidence type="ECO:0000303" key="7">
    <source>
    </source>
</evidence>
<evidence type="ECO:0000305" key="8"/>
<evidence type="ECO:0000312" key="9">
    <source>
        <dbReference type="EMBL" id="ABI94055.1"/>
    </source>
</evidence>
<evidence type="ECO:0000312" key="10">
    <source>
        <dbReference type="EMBL" id="JAA71163.1"/>
    </source>
</evidence>
<evidence type="ECO:0007744" key="11">
    <source>
        <dbReference type="PDB" id="7QTZ"/>
    </source>
</evidence>
<evidence type="ECO:0007829" key="12">
    <source>
        <dbReference type="PDB" id="7QTZ"/>
    </source>
</evidence>
<reference evidence="9" key="1">
    <citation type="journal article" date="2011" name="Blood">
        <title>A tick salivary protein targets cathepsin G and chymase and inhibits host inflammation and platelet aggregation.</title>
        <authorList>
            <person name="Chmelar J."/>
            <person name="Oliveira C.J."/>
            <person name="Rezacova P."/>
            <person name="Francischetti I.M."/>
            <person name="Kovarova Z."/>
            <person name="Pejler G."/>
            <person name="Kopacek P."/>
            <person name="Ribeiro J.M."/>
            <person name="Mares M."/>
            <person name="Kopecky J."/>
            <person name="Kotsyfakis M."/>
        </authorList>
    </citation>
    <scope>NUCLEOTIDE SEQUENCE [LARGE SCALE MRNA]</scope>
    <scope>TISSUE SPECIFICITY</scope>
    <source>
        <tissue evidence="9">Salivary gland</tissue>
    </source>
</reference>
<reference evidence="10" key="2">
    <citation type="submission" date="2012-12" db="EMBL/GenBank/DDBJ databases">
        <title>De novo Ixodes ricinus salivary transcriptome analysis using two different next generation sequencing methodologies.</title>
        <authorList>
            <person name="Schwarz A."/>
            <person name="von Reumont B.M."/>
            <person name="Erhart J."/>
            <person name="Chagas A.C."/>
            <person name="Ribeiro J.M.C."/>
            <person name="Kotsyfakis M."/>
        </authorList>
    </citation>
    <scope>NUCLEOTIDE SEQUENCE [LARGE SCALE MRNA]</scope>
    <source>
        <tissue evidence="10">Salivary gland</tissue>
    </source>
</reference>
<reference evidence="11" key="3">
    <citation type="journal article" date="2023" name="Front. Immunol.">
        <title>Iripin-1, a new anti-inflammatory tick serpin, inhibits leukocyte recruitment &lt;i&gt;in vivo&lt;/i&gt; while altering the levels of chemokines and adhesion molecules.</title>
        <authorList>
            <person name="Chlastakova A."/>
            <person name="Kascakova B."/>
            <person name="Kotal J."/>
            <person name="Langhansova H."/>
            <person name="Kotsyfakis M."/>
            <person name="Kuta Smatanova I."/>
            <person name="Tirloni L."/>
            <person name="Chmelar J."/>
        </authorList>
    </citation>
    <scope>X-RAY CRYSTALLOGRAPHY (2.10 ANGSTROMS) OF 17-392</scope>
    <scope>FUNCTION</scope>
    <scope>INTERACTION WITH HUMAN KLKB1; ST14 AND PLG</scope>
    <scope>TISSUE SPECIFICITY</scope>
    <scope>INDUCTION BY BLOOD FEEDING</scope>
</reference>
<dbReference type="EMBL" id="DQ915842">
    <property type="protein sequence ID" value="ABI94055.1"/>
    <property type="molecule type" value="mRNA"/>
</dbReference>
<dbReference type="EMBL" id="GADI01002645">
    <property type="protein sequence ID" value="JAA71163.1"/>
    <property type="molecule type" value="mRNA"/>
</dbReference>
<dbReference type="PDB" id="7QTZ">
    <property type="method" value="X-ray"/>
    <property type="resolution" value="2.10 A"/>
    <property type="chains" value="A/B=17-392"/>
</dbReference>
<dbReference type="PDBsum" id="7QTZ"/>
<dbReference type="SMR" id="Q06B75"/>
<dbReference type="MEROPS" id="I04.088"/>
<dbReference type="GO" id="GO:0005615">
    <property type="term" value="C:extracellular space"/>
    <property type="evidence" value="ECO:0007669"/>
    <property type="project" value="InterPro"/>
</dbReference>
<dbReference type="GO" id="GO:0004867">
    <property type="term" value="F:serine-type endopeptidase inhibitor activity"/>
    <property type="evidence" value="ECO:0007669"/>
    <property type="project" value="UniProtKB-KW"/>
</dbReference>
<dbReference type="GO" id="GO:0002376">
    <property type="term" value="P:immune system process"/>
    <property type="evidence" value="ECO:0007669"/>
    <property type="project" value="UniProtKB-KW"/>
</dbReference>
<dbReference type="CDD" id="cd19577">
    <property type="entry name" value="serpinJ_IRS-2-like"/>
    <property type="match status" value="1"/>
</dbReference>
<dbReference type="FunFam" id="3.30.497.10:FF:000031">
    <property type="entry name" value="Putative salivary serpin"/>
    <property type="match status" value="1"/>
</dbReference>
<dbReference type="Gene3D" id="2.30.39.10">
    <property type="entry name" value="Alpha-1-antitrypsin, domain 1"/>
    <property type="match status" value="1"/>
</dbReference>
<dbReference type="Gene3D" id="3.30.497.10">
    <property type="entry name" value="Antithrombin, subunit I, domain 2"/>
    <property type="match status" value="1"/>
</dbReference>
<dbReference type="InterPro" id="IPR023795">
    <property type="entry name" value="Serpin_CS"/>
</dbReference>
<dbReference type="InterPro" id="IPR023796">
    <property type="entry name" value="Serpin_dom"/>
</dbReference>
<dbReference type="InterPro" id="IPR000215">
    <property type="entry name" value="Serpin_fam"/>
</dbReference>
<dbReference type="InterPro" id="IPR036186">
    <property type="entry name" value="Serpin_sf"/>
</dbReference>
<dbReference type="InterPro" id="IPR042178">
    <property type="entry name" value="Serpin_sf_1"/>
</dbReference>
<dbReference type="InterPro" id="IPR042185">
    <property type="entry name" value="Serpin_sf_2"/>
</dbReference>
<dbReference type="PANTHER" id="PTHR11461:SF211">
    <property type="entry name" value="GH10112P-RELATED"/>
    <property type="match status" value="1"/>
</dbReference>
<dbReference type="PANTHER" id="PTHR11461">
    <property type="entry name" value="SERINE PROTEASE INHIBITOR, SERPIN"/>
    <property type="match status" value="1"/>
</dbReference>
<dbReference type="Pfam" id="PF00079">
    <property type="entry name" value="Serpin"/>
    <property type="match status" value="1"/>
</dbReference>
<dbReference type="SMART" id="SM00093">
    <property type="entry name" value="SERPIN"/>
    <property type="match status" value="1"/>
</dbReference>
<dbReference type="SUPFAM" id="SSF56574">
    <property type="entry name" value="Serpins"/>
    <property type="match status" value="1"/>
</dbReference>
<dbReference type="PROSITE" id="PS00284">
    <property type="entry name" value="SERPIN"/>
    <property type="match status" value="1"/>
</dbReference>
<organism evidence="9">
    <name type="scientific">Ixodes ricinus</name>
    <name type="common">Common tick</name>
    <name type="synonym">Acarus ricinus</name>
    <dbReference type="NCBI Taxonomy" id="34613"/>
    <lineage>
        <taxon>Eukaryota</taxon>
        <taxon>Metazoa</taxon>
        <taxon>Ecdysozoa</taxon>
        <taxon>Arthropoda</taxon>
        <taxon>Chelicerata</taxon>
        <taxon>Arachnida</taxon>
        <taxon>Acari</taxon>
        <taxon>Parasitiformes</taxon>
        <taxon>Ixodida</taxon>
        <taxon>Ixodoidea</taxon>
        <taxon>Ixodidae</taxon>
        <taxon>Ixodinae</taxon>
        <taxon>Ixodes</taxon>
    </lineage>
</organism>
<keyword id="KW-0002">3D-structure</keyword>
<keyword id="KW-0325">Glycoprotein</keyword>
<keyword id="KW-0391">Immunity</keyword>
<keyword id="KW-0646">Protease inhibitor</keyword>
<keyword id="KW-0964">Secreted</keyword>
<keyword id="KW-0722">Serine protease inhibitor</keyword>
<keyword id="KW-0732">Signal</keyword>